<feature type="initiator methionine" description="Removed" evidence="1">
    <location>
        <position position="1"/>
    </location>
</feature>
<feature type="chain" id="PRO_0000080684" description="Ubiquitin carboxyl-terminal hydrolase 46">
    <location>
        <begin position="2"/>
        <end position="426"/>
    </location>
</feature>
<feature type="domain" description="USP">
    <location>
        <begin position="27"/>
        <end position="406"/>
    </location>
</feature>
<feature type="region of interest" description="Disordered" evidence="4">
    <location>
        <begin position="162"/>
        <end position="181"/>
    </location>
</feature>
<feature type="active site" description="Nucleophile" evidence="2 3">
    <location>
        <position position="36"/>
    </location>
</feature>
<feature type="active site" description="Proton acceptor" evidence="2 3">
    <location>
        <position position="342"/>
    </location>
</feature>
<feature type="lipid moiety-binding region" description="N-myristoyl glycine" evidence="1">
    <location>
        <position position="2"/>
    </location>
</feature>
<feature type="splice variant" id="VSP_005268" description="In isoform b." evidence="8">
    <location>
        <begin position="32"/>
        <end position="43"/>
    </location>
</feature>
<feature type="mutagenesis site" description="Abolishes the increased glr-1 expression associated with coexpression of usp-46 with wdr-20 and wdr-48. Does not rescue the decreased glr-1 levels seen in usp-46 mutants. No effect on interaction with glr-1." evidence="5 7">
    <original>C</original>
    <variation>A</variation>
    <location>
        <position position="36"/>
    </location>
</feature>
<organism>
    <name type="scientific">Caenorhabditis elegans</name>
    <dbReference type="NCBI Taxonomy" id="6239"/>
    <lineage>
        <taxon>Eukaryota</taxon>
        <taxon>Metazoa</taxon>
        <taxon>Ecdysozoa</taxon>
        <taxon>Nematoda</taxon>
        <taxon>Chromadorea</taxon>
        <taxon>Rhabditida</taxon>
        <taxon>Rhabditina</taxon>
        <taxon>Rhabditomorpha</taxon>
        <taxon>Rhabditoidea</taxon>
        <taxon>Rhabditidae</taxon>
        <taxon>Peloderinae</taxon>
        <taxon>Caenorhabditis</taxon>
    </lineage>
</organism>
<name>UBP46_CAEEL</name>
<protein>
    <recommendedName>
        <fullName>Ubiquitin carboxyl-terminal hydrolase 46</fullName>
        <ecNumber>3.4.19.12</ecNumber>
    </recommendedName>
    <alternativeName>
        <fullName>Deubiquitinating enzyme</fullName>
    </alternativeName>
    <alternativeName>
        <fullName>Ubiquitin thioesterase</fullName>
    </alternativeName>
    <alternativeName>
        <fullName>Ubiquitin-specific-processing protease</fullName>
    </alternativeName>
</protein>
<dbReference type="EC" id="3.4.19.12"/>
<dbReference type="EMBL" id="Z29095">
    <property type="protein sequence ID" value="CAB54286.2"/>
    <property type="molecule type" value="Genomic_DNA"/>
</dbReference>
<dbReference type="EMBL" id="Z29095">
    <property type="protein sequence ID" value="CAB54287.2"/>
    <property type="molecule type" value="Genomic_DNA"/>
</dbReference>
<dbReference type="PIR" id="S40715">
    <property type="entry name" value="S40715"/>
</dbReference>
<dbReference type="RefSeq" id="NP_499162.2">
    <molecule id="P34547-1"/>
    <property type="nucleotide sequence ID" value="NM_066761.7"/>
</dbReference>
<dbReference type="RefSeq" id="NP_499163.2">
    <molecule id="P34547-2"/>
    <property type="nucleotide sequence ID" value="NM_066762.4"/>
</dbReference>
<dbReference type="SMR" id="P34547"/>
<dbReference type="BioGRID" id="41576">
    <property type="interactions" value="5"/>
</dbReference>
<dbReference type="FunCoup" id="P34547">
    <property type="interactions" value="3106"/>
</dbReference>
<dbReference type="STRING" id="6239.R10E11.3a.2"/>
<dbReference type="MEROPS" id="C19.A37"/>
<dbReference type="PaxDb" id="6239-R10E11.3a.2"/>
<dbReference type="PeptideAtlas" id="P34547"/>
<dbReference type="EnsemblMetazoa" id="R10E11.3a.1">
    <molecule id="P34547-1"/>
    <property type="protein sequence ID" value="R10E11.3a.1"/>
    <property type="gene ID" value="WBGene00011216"/>
</dbReference>
<dbReference type="EnsemblMetazoa" id="R10E11.3b.1">
    <molecule id="P34547-2"/>
    <property type="protein sequence ID" value="R10E11.3b.1"/>
    <property type="gene ID" value="WBGene00011216"/>
</dbReference>
<dbReference type="GeneID" id="176381"/>
<dbReference type="KEGG" id="cel:CELE_R10E11.3"/>
<dbReference type="UCSC" id="R10E11.3a.1">
    <molecule id="P34547-1"/>
    <property type="organism name" value="c. elegans"/>
</dbReference>
<dbReference type="AGR" id="WB:WBGene00011216"/>
<dbReference type="CTD" id="176381"/>
<dbReference type="WormBase" id="R10E11.3a">
    <molecule id="P34547-1"/>
    <property type="protein sequence ID" value="CE41150"/>
    <property type="gene ID" value="WBGene00011216"/>
    <property type="gene designation" value="usp-46"/>
</dbReference>
<dbReference type="WormBase" id="R10E11.3b">
    <molecule id="P34547-2"/>
    <property type="protein sequence ID" value="CE41151"/>
    <property type="gene ID" value="WBGene00011216"/>
    <property type="gene designation" value="usp-46"/>
</dbReference>
<dbReference type="eggNOG" id="KOG1864">
    <property type="taxonomic scope" value="Eukaryota"/>
</dbReference>
<dbReference type="GeneTree" id="ENSGT00940000153284"/>
<dbReference type="HOGENOM" id="CLU_008279_2_0_1"/>
<dbReference type="InParanoid" id="P34547"/>
<dbReference type="OMA" id="KSHNFWL"/>
<dbReference type="OrthoDB" id="27652at2759"/>
<dbReference type="PhylomeDB" id="P34547"/>
<dbReference type="Reactome" id="R-CEL-5689880">
    <property type="pathway name" value="Ub-specific processing proteases"/>
</dbReference>
<dbReference type="PRO" id="PR:P34547"/>
<dbReference type="Proteomes" id="UP000001940">
    <property type="component" value="Chromosome III"/>
</dbReference>
<dbReference type="Bgee" id="WBGene00011216">
    <property type="expression patterns" value="Expressed in germ line (C elegans) and 4 other cell types or tissues"/>
</dbReference>
<dbReference type="GO" id="GO:0005737">
    <property type="term" value="C:cytoplasm"/>
    <property type="evidence" value="ECO:0000314"/>
    <property type="project" value="WormBase"/>
</dbReference>
<dbReference type="GO" id="GO:0005829">
    <property type="term" value="C:cytosol"/>
    <property type="evidence" value="ECO:0000318"/>
    <property type="project" value="GO_Central"/>
</dbReference>
<dbReference type="GO" id="GO:0005768">
    <property type="term" value="C:endosome"/>
    <property type="evidence" value="ECO:0000314"/>
    <property type="project" value="WormBase"/>
</dbReference>
<dbReference type="GO" id="GO:0043025">
    <property type="term" value="C:neuronal cell body"/>
    <property type="evidence" value="ECO:0000314"/>
    <property type="project" value="WormBase"/>
</dbReference>
<dbReference type="GO" id="GO:0005634">
    <property type="term" value="C:nucleus"/>
    <property type="evidence" value="ECO:0000318"/>
    <property type="project" value="GO_Central"/>
</dbReference>
<dbReference type="GO" id="GO:0043204">
    <property type="term" value="C:perikaryon"/>
    <property type="evidence" value="ECO:0007669"/>
    <property type="project" value="UniProtKB-SubCell"/>
</dbReference>
<dbReference type="GO" id="GO:0004843">
    <property type="term" value="F:cysteine-type deubiquitinase activity"/>
    <property type="evidence" value="ECO:0000314"/>
    <property type="project" value="UniProtKB"/>
</dbReference>
<dbReference type="GO" id="GO:0035255">
    <property type="term" value="F:ionotropic glutamate receptor binding"/>
    <property type="evidence" value="ECO:0000353"/>
    <property type="project" value="WormBase"/>
</dbReference>
<dbReference type="GO" id="GO:0008595">
    <property type="term" value="P:anterior/posterior axis specification, embryo"/>
    <property type="evidence" value="ECO:0000316"/>
    <property type="project" value="WormBase"/>
</dbReference>
<dbReference type="GO" id="GO:0010628">
    <property type="term" value="P:positive regulation of gene expression"/>
    <property type="evidence" value="ECO:0000314"/>
    <property type="project" value="UniProtKB"/>
</dbReference>
<dbReference type="GO" id="GO:0090326">
    <property type="term" value="P:positive regulation of locomotion involved in locomotory behavior"/>
    <property type="evidence" value="ECO:0000315"/>
    <property type="project" value="UniProtKB"/>
</dbReference>
<dbReference type="GO" id="GO:0016579">
    <property type="term" value="P:protein deubiquitination"/>
    <property type="evidence" value="ECO:0007669"/>
    <property type="project" value="InterPro"/>
</dbReference>
<dbReference type="GO" id="GO:0006508">
    <property type="term" value="P:proteolysis"/>
    <property type="evidence" value="ECO:0007669"/>
    <property type="project" value="UniProtKB-KW"/>
</dbReference>
<dbReference type="GO" id="GO:0031647">
    <property type="term" value="P:regulation of protein stability"/>
    <property type="evidence" value="ECO:0000318"/>
    <property type="project" value="GO_Central"/>
</dbReference>
<dbReference type="CDD" id="cd02663">
    <property type="entry name" value="Peptidase_C19G"/>
    <property type="match status" value="1"/>
</dbReference>
<dbReference type="FunFam" id="3.90.70.10:FF:000112">
    <property type="entry name" value="Ubiquitin carboxyl-terminal hydrolase"/>
    <property type="match status" value="1"/>
</dbReference>
<dbReference type="Gene3D" id="3.90.70.10">
    <property type="entry name" value="Cysteine proteinases"/>
    <property type="match status" value="1"/>
</dbReference>
<dbReference type="InterPro" id="IPR038765">
    <property type="entry name" value="Papain-like_cys_pep_sf"/>
</dbReference>
<dbReference type="InterPro" id="IPR050164">
    <property type="entry name" value="Peptidase_C19"/>
</dbReference>
<dbReference type="InterPro" id="IPR001394">
    <property type="entry name" value="Peptidase_C19_UCH"/>
</dbReference>
<dbReference type="InterPro" id="IPR018200">
    <property type="entry name" value="USP_CS"/>
</dbReference>
<dbReference type="InterPro" id="IPR028889">
    <property type="entry name" value="USP_dom"/>
</dbReference>
<dbReference type="PANTHER" id="PTHR24006:SF733">
    <property type="entry name" value="RE52890P"/>
    <property type="match status" value="1"/>
</dbReference>
<dbReference type="PANTHER" id="PTHR24006">
    <property type="entry name" value="UBIQUITIN CARBOXYL-TERMINAL HYDROLASE"/>
    <property type="match status" value="1"/>
</dbReference>
<dbReference type="Pfam" id="PF00443">
    <property type="entry name" value="UCH"/>
    <property type="match status" value="1"/>
</dbReference>
<dbReference type="SUPFAM" id="SSF54001">
    <property type="entry name" value="Cysteine proteinases"/>
    <property type="match status" value="1"/>
</dbReference>
<dbReference type="PROSITE" id="PS00972">
    <property type="entry name" value="USP_1"/>
    <property type="match status" value="1"/>
</dbReference>
<dbReference type="PROSITE" id="PS00973">
    <property type="entry name" value="USP_2"/>
    <property type="match status" value="1"/>
</dbReference>
<dbReference type="PROSITE" id="PS50235">
    <property type="entry name" value="USP_3"/>
    <property type="match status" value="1"/>
</dbReference>
<reference key="1">
    <citation type="journal article" date="1994" name="Nature">
        <title>2.2 Mb of contiguous nucleotide sequence from chromosome III of C. elegans.</title>
        <authorList>
            <person name="Wilson R."/>
            <person name="Ainscough R."/>
            <person name="Anderson K."/>
            <person name="Baynes C."/>
            <person name="Berks M."/>
            <person name="Bonfield J."/>
            <person name="Burton J."/>
            <person name="Connell M."/>
            <person name="Copsey T."/>
            <person name="Cooper J."/>
            <person name="Coulson A."/>
            <person name="Craxton M."/>
            <person name="Dear S."/>
            <person name="Du Z."/>
            <person name="Durbin R."/>
            <person name="Favello A."/>
            <person name="Fraser A."/>
            <person name="Fulton L."/>
            <person name="Gardner A."/>
            <person name="Green P."/>
            <person name="Hawkins T."/>
            <person name="Hillier L."/>
            <person name="Jier M."/>
            <person name="Johnston L."/>
            <person name="Jones M."/>
            <person name="Kershaw J."/>
            <person name="Kirsten J."/>
            <person name="Laisster N."/>
            <person name="Latreille P."/>
            <person name="Lightning J."/>
            <person name="Lloyd C."/>
            <person name="Mortimore B."/>
            <person name="O'Callaghan M."/>
            <person name="Parsons J."/>
            <person name="Percy C."/>
            <person name="Rifken L."/>
            <person name="Roopra A."/>
            <person name="Saunders D."/>
            <person name="Shownkeen R."/>
            <person name="Sims M."/>
            <person name="Smaldon N."/>
            <person name="Smith A."/>
            <person name="Smith M."/>
            <person name="Sonnhammer E."/>
            <person name="Staden R."/>
            <person name="Sulston J."/>
            <person name="Thierry-Mieg J."/>
            <person name="Thomas K."/>
            <person name="Vaudin M."/>
            <person name="Vaughan K."/>
            <person name="Waterston R."/>
            <person name="Watson A."/>
            <person name="Weinstock L."/>
            <person name="Wilkinson-Sproat J."/>
            <person name="Wohldman P."/>
        </authorList>
    </citation>
    <scope>NUCLEOTIDE SEQUENCE [LARGE SCALE GENOMIC DNA]</scope>
    <source>
        <strain>Bristol N2</strain>
    </source>
</reference>
<reference key="2">
    <citation type="journal article" date="1998" name="Science">
        <title>Genome sequence of the nematode C. elegans: a platform for investigating biology.</title>
        <authorList>
            <consortium name="The C. elegans sequencing consortium"/>
        </authorList>
    </citation>
    <scope>NUCLEOTIDE SEQUENCE [LARGE SCALE GENOMIC DNA]</scope>
    <scope>ALTERNATIVE SPLICING</scope>
    <source>
        <strain>Bristol N2</strain>
    </source>
</reference>
<reference key="3">
    <citation type="journal article" date="2011" name="J. Neurosci.">
        <title>The deubiquitinating enzyme USP-46 negatively regulates the degradation of glutamate receptors to control their abundance in the ventral nerve cord of Caenorhabditis elegans.</title>
        <authorList>
            <person name="Kowalski J.R."/>
            <person name="Dahlberg C.L."/>
            <person name="Juo P."/>
        </authorList>
    </citation>
    <scope>FUNCTION</scope>
    <scope>INTERACTION WITH GLR-1</scope>
    <scope>SUBCELLULAR LOCATION</scope>
    <scope>TISSUE SPECIFICITY</scope>
    <scope>DISRUPTION PHENOTYPE</scope>
    <scope>MUTAGENESIS OF CYS-36</scope>
</reference>
<reference key="4">
    <citation type="journal article" date="2012" name="PLoS Genet.">
        <title>Deubiquitylation machinery is required for embryonic polarity in Caenorhabditis elegans.</title>
        <authorList>
            <person name="McCloskey R.J."/>
            <person name="Kemphues K.J."/>
        </authorList>
    </citation>
    <scope>FUNCTION</scope>
</reference>
<reference key="5">
    <citation type="journal article" date="2014" name="J. Biol. Chem.">
        <title>The WD40-repeat proteins WDR-20 and WDR-48 bind and activate the deubiquitinating enzyme USP-46 to promote the abundance of the glutamate receptor GLR-1 in the ventral nerve cord of Caenorhabditis elegans.</title>
        <authorList>
            <person name="Dahlberg C.L."/>
            <person name="Juo P."/>
        </authorList>
    </citation>
    <scope>INTERACTION WITH WDR-20 AND WDR-48</scope>
    <scope>MUTAGENESIS OF CYS-36</scope>
</reference>
<evidence type="ECO:0000255" key="1"/>
<evidence type="ECO:0000255" key="2">
    <source>
        <dbReference type="PROSITE-ProRule" id="PRU10092"/>
    </source>
</evidence>
<evidence type="ECO:0000255" key="3">
    <source>
        <dbReference type="PROSITE-ProRule" id="PRU10093"/>
    </source>
</evidence>
<evidence type="ECO:0000256" key="4">
    <source>
        <dbReference type="SAM" id="MobiDB-lite"/>
    </source>
</evidence>
<evidence type="ECO:0000269" key="5">
    <source>
    </source>
</evidence>
<evidence type="ECO:0000269" key="6">
    <source>
    </source>
</evidence>
<evidence type="ECO:0000269" key="7">
    <source>
    </source>
</evidence>
<evidence type="ECO:0000305" key="8"/>
<comment type="function">
    <text evidence="5 6">Regulates the abundance of the glr-1 glutamate receptor in the ventral nerve cord by promoting its deubiquitination and preventing its degradation in the lysosome. Contributes to the regulation of embryonic polarity.</text>
</comment>
<comment type="catalytic activity">
    <reaction>
        <text>Thiol-dependent hydrolysis of ester, thioester, amide, peptide and isopeptide bonds formed by the C-terminal Gly of ubiquitin (a 76-residue protein attached to proteins as an intracellular targeting signal).</text>
        <dbReference type="EC" id="3.4.19.12"/>
    </reaction>
</comment>
<comment type="subunit">
    <text evidence="5 7">Interacts with wdr-20 and wdr-48; the catalytic activity of usp-46 is increased in the presence of both wdr-20 and wdr-48. Interacts with glr-1; the interaction results in deubiquitination of glr-1.</text>
</comment>
<comment type="subcellular location">
    <subcellularLocation>
        <location evidence="5">Perikaryon</location>
    </subcellularLocation>
    <subcellularLocation>
        <location evidence="5">Cytoplasm</location>
    </subcellularLocation>
    <text>In ventral nerve cord interneurons, localized to discrete puncta within the perikaryon. In the ventral nerve cord, localized diffusely throughout the cytoplasm and to punctate structures.</text>
</comment>
<comment type="alternative products">
    <event type="alternative splicing"/>
    <isoform>
        <id>P34547-1</id>
        <name>a</name>
        <sequence type="displayed"/>
    </isoform>
    <isoform>
        <id>P34547-2</id>
        <name>b</name>
        <sequence type="described" ref="VSP_005268"/>
    </isoform>
</comment>
<comment type="tissue specificity">
    <text evidence="5">Expressed in a number of tissues including the nervous system, pharynx, body wall muscle, vulva muscle and intestine and is detected in many head and ventral cord neurons.</text>
</comment>
<comment type="disruption phenotype">
    <text evidence="5">Decreased levels of glr-1 in the ventral nerve cord and corresponding defects in glr-1-dependent behaviors including reduced spontaneous reversal frequency and reduced responsiveness to the nose touch assay which normally induces backward locomotion. Increased levels of ubiquitinated glr-1.</text>
</comment>
<comment type="similarity">
    <text evidence="8">Belongs to the peptidase C19 family.</text>
</comment>
<sequence length="426" mass="48277">MGATGSSQLEKEISTTESVNNANEHYYGLVNFGNTCYCNSVIQALFFCRPFREKVLNYKQTLKKSGASKDNLVTCLADLFHSIASQKRRVGTIAPKRFITKLKKENELFDNYMQQDAHEFFNYLINTISETLIQEKIAEREKASRHGTLKKGNVTVNLAPATAGLPRSDEKGTSERNGGITVEGNEFLNKSDTTTWIHEIFQGILTNETRCLSCETVSSKDEDFLDLSIDVEQNTSISHCLRVFSETETLCGDQKYFCETCSSKQEAQKRMRIKKPPQLLALHLKRFKFVEPLNRHTKLSYRVVFPLELRLFNVSDDAEYGDRMYDLVATVVHCGATPNRGHYITLVKSNSFWLVFDDDIVEKLEVSSMEEFSGMSTDANIQMPPGNQSAPQKNSESAYILFYQARDYAADDPNHNHKGKNSTHSV</sequence>
<keyword id="KW-0025">Alternative splicing</keyword>
<keyword id="KW-0963">Cytoplasm</keyword>
<keyword id="KW-0378">Hydrolase</keyword>
<keyword id="KW-0449">Lipoprotein</keyword>
<keyword id="KW-0519">Myristate</keyword>
<keyword id="KW-0645">Protease</keyword>
<keyword id="KW-1185">Reference proteome</keyword>
<keyword id="KW-0788">Thiol protease</keyword>
<keyword id="KW-0833">Ubl conjugation pathway</keyword>
<gene>
    <name type="primary">usp-46</name>
    <name type="ORF">R10E11.3</name>
</gene>
<accession>P34547</accession>
<proteinExistence type="evidence at protein level"/>